<dbReference type="EMBL" id="CR380957">
    <property type="protein sequence ID" value="CAR58050.1"/>
    <property type="molecule type" value="Genomic_DNA"/>
</dbReference>
<dbReference type="RefSeq" id="XP_002999577.1">
    <property type="nucleotide sequence ID" value="XM_002999531.1"/>
</dbReference>
<dbReference type="SMR" id="B4UN34"/>
<dbReference type="FunCoup" id="B4UN34">
    <property type="interactions" value="44"/>
</dbReference>
<dbReference type="EnsemblFungi" id="CAGL0K03459g-T">
    <property type="protein sequence ID" value="CAGL0K03459g-T-p1"/>
    <property type="gene ID" value="CAGL0K03459g"/>
</dbReference>
<dbReference type="KEGG" id="cgr:9488029"/>
<dbReference type="CGD" id="CAL0134707">
    <property type="gene designation" value="CAGL0K03459g"/>
</dbReference>
<dbReference type="VEuPathDB" id="FungiDB:B1J91_K03459g"/>
<dbReference type="VEuPathDB" id="FungiDB:CAGL0K03459g"/>
<dbReference type="eggNOG" id="ENOG502S7JY">
    <property type="taxonomic scope" value="Eukaryota"/>
</dbReference>
<dbReference type="HOGENOM" id="CLU_2158879_0_0_1"/>
<dbReference type="InParanoid" id="B4UN34"/>
<dbReference type="OMA" id="AHEYREP"/>
<dbReference type="Proteomes" id="UP000002428">
    <property type="component" value="Chromosome K"/>
</dbReference>
<dbReference type="InterPro" id="IPR020485">
    <property type="entry name" value="Spg4"/>
</dbReference>
<dbReference type="Pfam" id="PF17325">
    <property type="entry name" value="SPG4"/>
    <property type="match status" value="2"/>
</dbReference>
<protein>
    <recommendedName>
        <fullName>Stationary phase protein 4</fullName>
    </recommendedName>
</protein>
<reference key="1">
    <citation type="journal article" date="2004" name="Nature">
        <title>Genome evolution in yeasts.</title>
        <authorList>
            <person name="Dujon B."/>
            <person name="Sherman D."/>
            <person name="Fischer G."/>
            <person name="Durrens P."/>
            <person name="Casaregola S."/>
            <person name="Lafontaine I."/>
            <person name="de Montigny J."/>
            <person name="Marck C."/>
            <person name="Neuveglise C."/>
            <person name="Talla E."/>
            <person name="Goffard N."/>
            <person name="Frangeul L."/>
            <person name="Aigle M."/>
            <person name="Anthouard V."/>
            <person name="Babour A."/>
            <person name="Barbe V."/>
            <person name="Barnay S."/>
            <person name="Blanchin S."/>
            <person name="Beckerich J.-M."/>
            <person name="Beyne E."/>
            <person name="Bleykasten C."/>
            <person name="Boisrame A."/>
            <person name="Boyer J."/>
            <person name="Cattolico L."/>
            <person name="Confanioleri F."/>
            <person name="de Daruvar A."/>
            <person name="Despons L."/>
            <person name="Fabre E."/>
            <person name="Fairhead C."/>
            <person name="Ferry-Dumazet H."/>
            <person name="Groppi A."/>
            <person name="Hantraye F."/>
            <person name="Hennequin C."/>
            <person name="Jauniaux N."/>
            <person name="Joyet P."/>
            <person name="Kachouri R."/>
            <person name="Kerrest A."/>
            <person name="Koszul R."/>
            <person name="Lemaire M."/>
            <person name="Lesur I."/>
            <person name="Ma L."/>
            <person name="Muller H."/>
            <person name="Nicaud J.-M."/>
            <person name="Nikolski M."/>
            <person name="Oztas S."/>
            <person name="Ozier-Kalogeropoulos O."/>
            <person name="Pellenz S."/>
            <person name="Potier S."/>
            <person name="Richard G.-F."/>
            <person name="Straub M.-L."/>
            <person name="Suleau A."/>
            <person name="Swennen D."/>
            <person name="Tekaia F."/>
            <person name="Wesolowski-Louvel M."/>
            <person name="Westhof E."/>
            <person name="Wirth B."/>
            <person name="Zeniou-Meyer M."/>
            <person name="Zivanovic Y."/>
            <person name="Bolotin-Fukuhara M."/>
            <person name="Thierry A."/>
            <person name="Bouchier C."/>
            <person name="Caudron B."/>
            <person name="Scarpelli C."/>
            <person name="Gaillardin C."/>
            <person name="Weissenbach J."/>
            <person name="Wincker P."/>
            <person name="Souciet J.-L."/>
        </authorList>
    </citation>
    <scope>NUCLEOTIDE SEQUENCE [LARGE SCALE GENOMIC DNA]</scope>
    <source>
        <strain>ATCC 2001 / BCRC 20586 / JCM 3761 / NBRC 0622 / NRRL Y-65 / CBS 138</strain>
    </source>
</reference>
<sequence length="94" mass="10753">MPSFWDSFAVYNRNKHAKGDVHGGHMSQNMGGQPMYLQAKEHADIKKKEDGTLEAKIETPDGPRLVDVSNMTQQEFERTYNSLRKGEPNNRVNF</sequence>
<comment type="function">
    <text evidence="1">Stationary phase-essential protein not required for growth on nonfermentable carbon sources.</text>
</comment>
<comment type="similarity">
    <text evidence="2">Belongs to the SPG4 family.</text>
</comment>
<evidence type="ECO:0000250" key="1"/>
<evidence type="ECO:0000305" key="2"/>
<gene>
    <name type="primary">SPG4</name>
    <name type="ordered locus">CAGL0K03459g</name>
</gene>
<feature type="chain" id="PRO_0000405000" description="Stationary phase protein 4">
    <location>
        <begin position="1"/>
        <end position="94"/>
    </location>
</feature>
<proteinExistence type="inferred from homology"/>
<name>SPG4_CANGA</name>
<accession>B4UN34</accession>
<organism>
    <name type="scientific">Candida glabrata (strain ATCC 2001 / BCRC 20586 / JCM 3761 / NBRC 0622 / NRRL Y-65 / CBS 138)</name>
    <name type="common">Yeast</name>
    <name type="synonym">Nakaseomyces glabratus</name>
    <dbReference type="NCBI Taxonomy" id="284593"/>
    <lineage>
        <taxon>Eukaryota</taxon>
        <taxon>Fungi</taxon>
        <taxon>Dikarya</taxon>
        <taxon>Ascomycota</taxon>
        <taxon>Saccharomycotina</taxon>
        <taxon>Saccharomycetes</taxon>
        <taxon>Saccharomycetales</taxon>
        <taxon>Saccharomycetaceae</taxon>
        <taxon>Nakaseomyces</taxon>
    </lineage>
</organism>
<keyword id="KW-1185">Reference proteome</keyword>